<feature type="chain" id="PRO_0000276114" description="Photosystem II reaction center protein J">
    <location>
        <begin position="1"/>
        <end position="40"/>
    </location>
</feature>
<feature type="transmembrane region" description="Helical" evidence="1">
    <location>
        <begin position="8"/>
        <end position="28"/>
    </location>
</feature>
<dbReference type="EMBL" id="DQ347959">
    <property type="protein sequence ID" value="ABC56314.1"/>
    <property type="molecule type" value="Genomic_DNA"/>
</dbReference>
<dbReference type="EMBL" id="AM087200">
    <property type="protein sequence ID" value="CAJ32407.1"/>
    <property type="molecule type" value="Genomic_DNA"/>
</dbReference>
<dbReference type="RefSeq" id="AP_004942.1">
    <property type="nucleotide sequence ID" value="AC_000188.1"/>
</dbReference>
<dbReference type="RefSeq" id="YP_008563102.1">
    <property type="nucleotide sequence ID" value="NC_007898.3"/>
</dbReference>
<dbReference type="SMR" id="Q2MI86"/>
<dbReference type="FunCoup" id="Q2MI86">
    <property type="interactions" value="42"/>
</dbReference>
<dbReference type="STRING" id="4081.Q2MI86"/>
<dbReference type="PaxDb" id="4081-Solyc01g007400.1.1"/>
<dbReference type="GeneID" id="3950394"/>
<dbReference type="KEGG" id="sly:3950394"/>
<dbReference type="eggNOG" id="ENOG502SBI8">
    <property type="taxonomic scope" value="Eukaryota"/>
</dbReference>
<dbReference type="InParanoid" id="Q2MI86"/>
<dbReference type="Proteomes" id="UP000004994">
    <property type="component" value="Chloroplast"/>
</dbReference>
<dbReference type="GO" id="GO:0009535">
    <property type="term" value="C:chloroplast thylakoid membrane"/>
    <property type="evidence" value="ECO:0007669"/>
    <property type="project" value="UniProtKB-SubCell"/>
</dbReference>
<dbReference type="GO" id="GO:0009523">
    <property type="term" value="C:photosystem II"/>
    <property type="evidence" value="ECO:0000318"/>
    <property type="project" value="GO_Central"/>
</dbReference>
<dbReference type="GO" id="GO:0009539">
    <property type="term" value="C:photosystem II reaction center"/>
    <property type="evidence" value="ECO:0007669"/>
    <property type="project" value="InterPro"/>
</dbReference>
<dbReference type="GO" id="GO:0015979">
    <property type="term" value="P:photosynthesis"/>
    <property type="evidence" value="ECO:0007669"/>
    <property type="project" value="UniProtKB-UniRule"/>
</dbReference>
<dbReference type="Gene3D" id="6.10.250.2070">
    <property type="match status" value="1"/>
</dbReference>
<dbReference type="HAMAP" id="MF_01305">
    <property type="entry name" value="PSII_PsbJ"/>
    <property type="match status" value="1"/>
</dbReference>
<dbReference type="InterPro" id="IPR002682">
    <property type="entry name" value="PSII_PsbJ"/>
</dbReference>
<dbReference type="InterPro" id="IPR037267">
    <property type="entry name" value="PSII_PsbJ_sf"/>
</dbReference>
<dbReference type="NCBIfam" id="NF002722">
    <property type="entry name" value="PRK02565.1"/>
    <property type="match status" value="1"/>
</dbReference>
<dbReference type="PANTHER" id="PTHR34812">
    <property type="entry name" value="PHOTOSYSTEM II REACTION CENTER PROTEIN J"/>
    <property type="match status" value="1"/>
</dbReference>
<dbReference type="PANTHER" id="PTHR34812:SF3">
    <property type="entry name" value="PHOTOSYSTEM II REACTION CENTER PROTEIN J"/>
    <property type="match status" value="1"/>
</dbReference>
<dbReference type="Pfam" id="PF01788">
    <property type="entry name" value="PsbJ"/>
    <property type="match status" value="1"/>
</dbReference>
<dbReference type="SUPFAM" id="SSF161021">
    <property type="entry name" value="Photosystem II reaction center protein J, PsbJ"/>
    <property type="match status" value="1"/>
</dbReference>
<accession>Q2MI86</accession>
<reference key="1">
    <citation type="journal article" date="2006" name="Theor. Appl. Genet.">
        <title>Complete chloroplast genome sequences of Solanum bulbocastanum, Solanum lycopersicum and comparative analyses with other Solanaceae genomes.</title>
        <authorList>
            <person name="Daniell H."/>
            <person name="Lee S.-B."/>
            <person name="Grevich J."/>
            <person name="Saski C."/>
            <person name="Quesada-Vargas T."/>
            <person name="Guda C."/>
            <person name="Tomkins J."/>
            <person name="Jansen R.K."/>
        </authorList>
    </citation>
    <scope>NUCLEOTIDE SEQUENCE [LARGE SCALE GENOMIC DNA]</scope>
    <source>
        <strain>cv. LA3023</strain>
    </source>
</reference>
<reference key="2">
    <citation type="journal article" date="2006" name="J. Mol. Evol.">
        <title>Sequence of the tomato chloroplast DNA and evolutionary comparison of solanaceous plastid genomes.</title>
        <authorList>
            <person name="Kahlau S."/>
            <person name="Aspinall S."/>
            <person name="Gray J.C."/>
            <person name="Bock R."/>
        </authorList>
    </citation>
    <scope>NUCLEOTIDE SEQUENCE [LARGE SCALE GENOMIC DNA]</scope>
    <source>
        <strain>cv. IPA-6</strain>
    </source>
</reference>
<keyword id="KW-0150">Chloroplast</keyword>
<keyword id="KW-0472">Membrane</keyword>
<keyword id="KW-0602">Photosynthesis</keyword>
<keyword id="KW-0604">Photosystem II</keyword>
<keyword id="KW-0934">Plastid</keyword>
<keyword id="KW-0674">Reaction center</keyword>
<keyword id="KW-1185">Reference proteome</keyword>
<keyword id="KW-0793">Thylakoid</keyword>
<keyword id="KW-0812">Transmembrane</keyword>
<keyword id="KW-1133">Transmembrane helix</keyword>
<gene>
    <name evidence="1" type="primary">psbJ</name>
</gene>
<comment type="function">
    <text evidence="1">One of the components of the core complex of photosystem II (PSII). PSII is a light-driven water:plastoquinone oxidoreductase that uses light energy to abstract electrons from H(2)O, generating O(2) and a proton gradient subsequently used for ATP formation. It consists of a core antenna complex that captures photons, and an electron transfer chain that converts photonic excitation into a charge separation.</text>
</comment>
<comment type="subunit">
    <text evidence="1">PSII is composed of 1 copy each of membrane proteins PsbA, PsbB, PsbC, PsbD, PsbE, PsbF, PsbH, PsbI, PsbJ, PsbK, PsbL, PsbM, PsbT, PsbX, PsbY, PsbZ, Psb30/Ycf12, at least 3 peripheral proteins of the oxygen-evolving complex and a large number of cofactors. It forms dimeric complexes.</text>
</comment>
<comment type="subcellular location">
    <subcellularLocation>
        <location evidence="1">Plastid</location>
        <location evidence="1">Chloroplast thylakoid membrane</location>
        <topology evidence="1">Single-pass membrane protein</topology>
    </subcellularLocation>
</comment>
<comment type="similarity">
    <text evidence="1">Belongs to the PsbJ family.</text>
</comment>
<protein>
    <recommendedName>
        <fullName evidence="1">Photosystem II reaction center protein J</fullName>
        <shortName evidence="1">PSII-J</shortName>
    </recommendedName>
</protein>
<sequence length="40" mass="4131">MADTTGRIPLWIIGTVAGILVIGLIGIFFYGSYSGLGSSL</sequence>
<proteinExistence type="inferred from homology"/>
<organism>
    <name type="scientific">Solanum lycopersicum</name>
    <name type="common">Tomato</name>
    <name type="synonym">Lycopersicon esculentum</name>
    <dbReference type="NCBI Taxonomy" id="4081"/>
    <lineage>
        <taxon>Eukaryota</taxon>
        <taxon>Viridiplantae</taxon>
        <taxon>Streptophyta</taxon>
        <taxon>Embryophyta</taxon>
        <taxon>Tracheophyta</taxon>
        <taxon>Spermatophyta</taxon>
        <taxon>Magnoliopsida</taxon>
        <taxon>eudicotyledons</taxon>
        <taxon>Gunneridae</taxon>
        <taxon>Pentapetalae</taxon>
        <taxon>asterids</taxon>
        <taxon>lamiids</taxon>
        <taxon>Solanales</taxon>
        <taxon>Solanaceae</taxon>
        <taxon>Solanoideae</taxon>
        <taxon>Solaneae</taxon>
        <taxon>Solanum</taxon>
        <taxon>Solanum subgen. Lycopersicon</taxon>
    </lineage>
</organism>
<geneLocation type="chloroplast"/>
<evidence type="ECO:0000255" key="1">
    <source>
        <dbReference type="HAMAP-Rule" id="MF_01305"/>
    </source>
</evidence>
<name>PSBJ_SOLLC</name>